<gene>
    <name evidence="1" type="primary">SGF11</name>
    <name type="ordered locus">YPL047W</name>
</gene>
<dbReference type="EMBL" id="U44030">
    <property type="protein sequence ID" value="AAB68174.1"/>
    <property type="molecule type" value="Genomic_DNA"/>
</dbReference>
<dbReference type="EMBL" id="AY558330">
    <property type="protein sequence ID" value="AAS56656.1"/>
    <property type="molecule type" value="Genomic_DNA"/>
</dbReference>
<dbReference type="EMBL" id="BK006949">
    <property type="protein sequence ID" value="DAA11383.1"/>
    <property type="molecule type" value="Genomic_DNA"/>
</dbReference>
<dbReference type="PIR" id="S62029">
    <property type="entry name" value="S62029"/>
</dbReference>
<dbReference type="RefSeq" id="NP_015278.1">
    <property type="nucleotide sequence ID" value="NM_001183861.1"/>
</dbReference>
<dbReference type="PDB" id="2LO2">
    <property type="method" value="NMR"/>
    <property type="chains" value="A=63-99"/>
</dbReference>
<dbReference type="PDB" id="3KIK">
    <property type="method" value="X-ray"/>
    <property type="resolution" value="2.10 A"/>
    <property type="chains" value="E/F/G/H=7-33"/>
</dbReference>
<dbReference type="PDB" id="3KJL">
    <property type="method" value="X-ray"/>
    <property type="resolution" value="2.70 A"/>
    <property type="chains" value="E/F/G/H=2-33"/>
</dbReference>
<dbReference type="PDB" id="3M99">
    <property type="method" value="X-ray"/>
    <property type="resolution" value="2.70 A"/>
    <property type="chains" value="B=1-99"/>
</dbReference>
<dbReference type="PDB" id="3MHH">
    <property type="method" value="X-ray"/>
    <property type="resolution" value="2.45 A"/>
    <property type="chains" value="C=1-99"/>
</dbReference>
<dbReference type="PDB" id="3MHS">
    <property type="method" value="X-ray"/>
    <property type="resolution" value="1.89 A"/>
    <property type="chains" value="C=1-99"/>
</dbReference>
<dbReference type="PDB" id="4FIP">
    <property type="method" value="X-ray"/>
    <property type="resolution" value="2.69 A"/>
    <property type="chains" value="C/G=1-72"/>
</dbReference>
<dbReference type="PDB" id="4FJC">
    <property type="method" value="X-ray"/>
    <property type="resolution" value="2.83 A"/>
    <property type="chains" value="C/G=1-99"/>
</dbReference>
<dbReference type="PDB" id="4FK5">
    <property type="method" value="X-ray"/>
    <property type="resolution" value="2.03 A"/>
    <property type="chains" value="C=1-99"/>
</dbReference>
<dbReference type="PDB" id="4WA6">
    <property type="method" value="X-ray"/>
    <property type="resolution" value="2.36 A"/>
    <property type="chains" value="C/G=1-99"/>
</dbReference>
<dbReference type="PDB" id="4ZUX">
    <property type="method" value="X-ray"/>
    <property type="resolution" value="3.82 A"/>
    <property type="chains" value="W/b/g/l=1-99"/>
</dbReference>
<dbReference type="PDB" id="6AQR">
    <property type="method" value="X-ray"/>
    <property type="resolution" value="2.10 A"/>
    <property type="chains" value="C=1-99"/>
</dbReference>
<dbReference type="PDB" id="6T9L">
    <property type="method" value="EM"/>
    <property type="resolution" value="3.60 A"/>
    <property type="chains" value="M=1-99"/>
</dbReference>
<dbReference type="PDBsum" id="2LO2"/>
<dbReference type="PDBsum" id="3KIK"/>
<dbReference type="PDBsum" id="3KJL"/>
<dbReference type="PDBsum" id="3M99"/>
<dbReference type="PDBsum" id="3MHH"/>
<dbReference type="PDBsum" id="3MHS"/>
<dbReference type="PDBsum" id="4FIP"/>
<dbReference type="PDBsum" id="4FJC"/>
<dbReference type="PDBsum" id="4FK5"/>
<dbReference type="PDBsum" id="4WA6"/>
<dbReference type="PDBsum" id="4ZUX"/>
<dbReference type="PDBsum" id="6AQR"/>
<dbReference type="PDBsum" id="6T9L"/>
<dbReference type="BMRB" id="Q03067"/>
<dbReference type="EMDB" id="EMD-10415"/>
<dbReference type="SMR" id="Q03067"/>
<dbReference type="BioGRID" id="36133">
    <property type="interactions" value="394"/>
</dbReference>
<dbReference type="ComplexPortal" id="CPX-656">
    <property type="entry name" value="SAGA complex"/>
</dbReference>
<dbReference type="ComplexPortal" id="CPX-675">
    <property type="entry name" value="SLIK (SAGA-like) complex"/>
</dbReference>
<dbReference type="DIP" id="DIP-39582N"/>
<dbReference type="FunCoup" id="Q03067">
    <property type="interactions" value="351"/>
</dbReference>
<dbReference type="IntAct" id="Q03067">
    <property type="interactions" value="26"/>
</dbReference>
<dbReference type="MINT" id="Q03067"/>
<dbReference type="STRING" id="4932.YPL047W"/>
<dbReference type="PaxDb" id="4932-YPL047W"/>
<dbReference type="PeptideAtlas" id="Q03067"/>
<dbReference type="EnsemblFungi" id="YPL047W_mRNA">
    <property type="protein sequence ID" value="YPL047W"/>
    <property type="gene ID" value="YPL047W"/>
</dbReference>
<dbReference type="GeneID" id="856060"/>
<dbReference type="KEGG" id="sce:YPL047W"/>
<dbReference type="AGR" id="SGD:S000005968"/>
<dbReference type="SGD" id="S000005968">
    <property type="gene designation" value="SGF11"/>
</dbReference>
<dbReference type="VEuPathDB" id="FungiDB:YPL047W"/>
<dbReference type="eggNOG" id="KOG2612">
    <property type="taxonomic scope" value="Eukaryota"/>
</dbReference>
<dbReference type="HOGENOM" id="CLU_2320099_0_0_1"/>
<dbReference type="InParanoid" id="Q03067"/>
<dbReference type="OMA" id="SSQYFHC"/>
<dbReference type="OrthoDB" id="21557at2759"/>
<dbReference type="BioCyc" id="YEAST:G3O-33960-MONOMER"/>
<dbReference type="BioGRID-ORCS" id="856060">
    <property type="hits" value="2 hits in 10 CRISPR screens"/>
</dbReference>
<dbReference type="ChiTaRS" id="SGF11">
    <property type="organism name" value="yeast"/>
</dbReference>
<dbReference type="EvolutionaryTrace" id="Q03067"/>
<dbReference type="PRO" id="PR:Q03067"/>
<dbReference type="Proteomes" id="UP000002311">
    <property type="component" value="Chromosome XVI"/>
</dbReference>
<dbReference type="RNAct" id="Q03067">
    <property type="molecule type" value="protein"/>
</dbReference>
<dbReference type="GO" id="GO:0071819">
    <property type="term" value="C:DUBm complex"/>
    <property type="evidence" value="ECO:0000314"/>
    <property type="project" value="SGD"/>
</dbReference>
<dbReference type="GO" id="GO:0005634">
    <property type="term" value="C:nucleus"/>
    <property type="evidence" value="ECO:0007005"/>
    <property type="project" value="SGD"/>
</dbReference>
<dbReference type="GO" id="GO:0000124">
    <property type="term" value="C:SAGA complex"/>
    <property type="evidence" value="ECO:0000314"/>
    <property type="project" value="SGD"/>
</dbReference>
<dbReference type="GO" id="GO:0046695">
    <property type="term" value="C:SLIK (SAGA-like) complex"/>
    <property type="evidence" value="ECO:0000353"/>
    <property type="project" value="ComplexPortal"/>
</dbReference>
<dbReference type="GO" id="GO:0008047">
    <property type="term" value="F:enzyme activator activity"/>
    <property type="evidence" value="ECO:0000314"/>
    <property type="project" value="SGD"/>
</dbReference>
<dbReference type="GO" id="GO:0003713">
    <property type="term" value="F:transcription coactivator activity"/>
    <property type="evidence" value="ECO:0007669"/>
    <property type="project" value="UniProtKB-UniRule"/>
</dbReference>
<dbReference type="GO" id="GO:0008270">
    <property type="term" value="F:zinc ion binding"/>
    <property type="evidence" value="ECO:0007669"/>
    <property type="project" value="UniProtKB-UniRule"/>
</dbReference>
<dbReference type="GO" id="GO:0006325">
    <property type="term" value="P:chromatin organization"/>
    <property type="evidence" value="ECO:0007669"/>
    <property type="project" value="UniProtKB-KW"/>
</dbReference>
<dbReference type="GO" id="GO:0006357">
    <property type="term" value="P:regulation of transcription by RNA polymerase II"/>
    <property type="evidence" value="ECO:0000314"/>
    <property type="project" value="ComplexPortal"/>
</dbReference>
<dbReference type="FunFam" id="3.30.160.60:FF:000118">
    <property type="entry name" value="Ataxin-7-like protein 3"/>
    <property type="match status" value="1"/>
</dbReference>
<dbReference type="FunFam" id="1.10.287.210:FF:000006">
    <property type="entry name" value="SAGA-associated factor 11"/>
    <property type="match status" value="1"/>
</dbReference>
<dbReference type="Gene3D" id="1.10.287.210">
    <property type="match status" value="1"/>
</dbReference>
<dbReference type="Gene3D" id="3.30.160.60">
    <property type="entry name" value="Classic Zinc Finger"/>
    <property type="match status" value="1"/>
</dbReference>
<dbReference type="HAMAP" id="MF_03047">
    <property type="entry name" value="Sgf11"/>
    <property type="match status" value="1"/>
</dbReference>
<dbReference type="InterPro" id="IPR013246">
    <property type="entry name" value="SAGA_su_Sgf11"/>
</dbReference>
<dbReference type="InterPro" id="IPR041216">
    <property type="entry name" value="Sgf11_N"/>
</dbReference>
<dbReference type="Pfam" id="PF08209">
    <property type="entry name" value="Sgf11"/>
    <property type="match status" value="1"/>
</dbReference>
<dbReference type="Pfam" id="PF18519">
    <property type="entry name" value="Sgf11_N"/>
    <property type="match status" value="1"/>
</dbReference>
<reference key="1">
    <citation type="journal article" date="1997" name="Nature">
        <title>The nucleotide sequence of Saccharomyces cerevisiae chromosome XVI.</title>
        <authorList>
            <person name="Bussey H."/>
            <person name="Storms R.K."/>
            <person name="Ahmed A."/>
            <person name="Albermann K."/>
            <person name="Allen E."/>
            <person name="Ansorge W."/>
            <person name="Araujo R."/>
            <person name="Aparicio A."/>
            <person name="Barrell B.G."/>
            <person name="Badcock K."/>
            <person name="Benes V."/>
            <person name="Botstein D."/>
            <person name="Bowman S."/>
            <person name="Brueckner M."/>
            <person name="Carpenter J."/>
            <person name="Cherry J.M."/>
            <person name="Chung E."/>
            <person name="Churcher C.M."/>
            <person name="Coster F."/>
            <person name="Davis K."/>
            <person name="Davis R.W."/>
            <person name="Dietrich F.S."/>
            <person name="Delius H."/>
            <person name="DiPaolo T."/>
            <person name="Dubois E."/>
            <person name="Duesterhoeft A."/>
            <person name="Duncan M."/>
            <person name="Floeth M."/>
            <person name="Fortin N."/>
            <person name="Friesen J.D."/>
            <person name="Fritz C."/>
            <person name="Goffeau A."/>
            <person name="Hall J."/>
            <person name="Hebling U."/>
            <person name="Heumann K."/>
            <person name="Hilbert H."/>
            <person name="Hillier L.W."/>
            <person name="Hunicke-Smith S."/>
            <person name="Hyman R.W."/>
            <person name="Johnston M."/>
            <person name="Kalman S."/>
            <person name="Kleine K."/>
            <person name="Komp C."/>
            <person name="Kurdi O."/>
            <person name="Lashkari D."/>
            <person name="Lew H."/>
            <person name="Lin A."/>
            <person name="Lin D."/>
            <person name="Louis E.J."/>
            <person name="Marathe R."/>
            <person name="Messenguy F."/>
            <person name="Mewes H.-W."/>
            <person name="Mirtipati S."/>
            <person name="Moestl D."/>
            <person name="Mueller-Auer S."/>
            <person name="Namath A."/>
            <person name="Nentwich U."/>
            <person name="Oefner P."/>
            <person name="Pearson D."/>
            <person name="Petel F.X."/>
            <person name="Pohl T.M."/>
            <person name="Purnelle B."/>
            <person name="Rajandream M.A."/>
            <person name="Rechmann S."/>
            <person name="Rieger M."/>
            <person name="Riles L."/>
            <person name="Roberts D."/>
            <person name="Schaefer M."/>
            <person name="Scharfe M."/>
            <person name="Scherens B."/>
            <person name="Schramm S."/>
            <person name="Schroeder M."/>
            <person name="Sdicu A.-M."/>
            <person name="Tettelin H."/>
            <person name="Urrestarazu L.A."/>
            <person name="Ushinsky S."/>
            <person name="Vierendeels F."/>
            <person name="Vissers S."/>
            <person name="Voss H."/>
            <person name="Walsh S.V."/>
            <person name="Wambutt R."/>
            <person name="Wang Y."/>
            <person name="Wedler E."/>
            <person name="Wedler H."/>
            <person name="Winnett E."/>
            <person name="Zhong W.-W."/>
            <person name="Zollner A."/>
            <person name="Vo D.H."/>
            <person name="Hani J."/>
        </authorList>
    </citation>
    <scope>NUCLEOTIDE SEQUENCE [LARGE SCALE GENOMIC DNA]</scope>
    <source>
        <strain>ATCC 204508 / S288c</strain>
    </source>
</reference>
<reference key="2">
    <citation type="journal article" date="2014" name="G3 (Bethesda)">
        <title>The reference genome sequence of Saccharomyces cerevisiae: Then and now.</title>
        <authorList>
            <person name="Engel S.R."/>
            <person name="Dietrich F.S."/>
            <person name="Fisk D.G."/>
            <person name="Binkley G."/>
            <person name="Balakrishnan R."/>
            <person name="Costanzo M.C."/>
            <person name="Dwight S.S."/>
            <person name="Hitz B.C."/>
            <person name="Karra K."/>
            <person name="Nash R.S."/>
            <person name="Weng S."/>
            <person name="Wong E.D."/>
            <person name="Lloyd P."/>
            <person name="Skrzypek M.S."/>
            <person name="Miyasato S.R."/>
            <person name="Simison M."/>
            <person name="Cherry J.M."/>
        </authorList>
    </citation>
    <scope>GENOME REANNOTATION</scope>
    <source>
        <strain>ATCC 204508 / S288c</strain>
    </source>
</reference>
<reference key="3">
    <citation type="journal article" date="2007" name="Genome Res.">
        <title>Approaching a complete repository of sequence-verified protein-encoding clones for Saccharomyces cerevisiae.</title>
        <authorList>
            <person name="Hu Y."/>
            <person name="Rolfs A."/>
            <person name="Bhullar B."/>
            <person name="Murthy T.V.S."/>
            <person name="Zhu C."/>
            <person name="Berger M.F."/>
            <person name="Camargo A.A."/>
            <person name="Kelley F."/>
            <person name="McCarron S."/>
            <person name="Jepson D."/>
            <person name="Richardson A."/>
            <person name="Raphael J."/>
            <person name="Moreira D."/>
            <person name="Taycher E."/>
            <person name="Zuo D."/>
            <person name="Mohr S."/>
            <person name="Kane M.F."/>
            <person name="Williamson J."/>
            <person name="Simpson A.J.G."/>
            <person name="Bulyk M.L."/>
            <person name="Harlow E."/>
            <person name="Marsischky G."/>
            <person name="Kolodner R.D."/>
            <person name="LaBaer J."/>
        </authorList>
    </citation>
    <scope>NUCLEOTIDE SEQUENCE [GENOMIC DNA]</scope>
    <source>
        <strain>ATCC 204508 / S288c</strain>
    </source>
</reference>
<reference key="4">
    <citation type="journal article" date="2003" name="Nature">
        <title>Global analysis of protein localization in budding yeast.</title>
        <authorList>
            <person name="Huh W.-K."/>
            <person name="Falvo J.V."/>
            <person name="Gerke L.C."/>
            <person name="Carroll A.S."/>
            <person name="Howson R.W."/>
            <person name="Weissman J.S."/>
            <person name="O'Shea E.K."/>
        </authorList>
    </citation>
    <scope>SUBCELLULAR LOCATION [LARGE SCALE ANALYSIS]</scope>
</reference>
<reference key="5">
    <citation type="journal article" date="2003" name="Nature">
        <title>Global analysis of protein expression in yeast.</title>
        <authorList>
            <person name="Ghaemmaghami S."/>
            <person name="Huh W.-K."/>
            <person name="Bower K."/>
            <person name="Howson R.W."/>
            <person name="Belle A."/>
            <person name="Dephoure N."/>
            <person name="O'Shea E.K."/>
            <person name="Weissman J.S."/>
        </authorList>
    </citation>
    <scope>LEVEL OF PROTEIN EXPRESSION [LARGE SCALE ANALYSIS]</scope>
</reference>
<reference key="6">
    <citation type="journal article" date="2004" name="Biochem. Soc. Trans.">
        <title>Proteomic analysis of chromatin-modifying complexes in Saccharomyces cerevisiae identifies novel subunits.</title>
        <authorList>
            <person name="Lee K.K."/>
            <person name="Prochasson P."/>
            <person name="Florens L."/>
            <person name="Swanson S.K."/>
            <person name="Washburn M.P."/>
            <person name="Workman J.L."/>
        </authorList>
    </citation>
    <scope>IDENTIFICATION IN THE SAGA COMPLEX</scope>
</reference>
<reference key="7">
    <citation type="journal article" date="2004" name="Mol. Cell. Biol.">
        <title>Cluster analysis of mass spectrometry data reveals a novel component of SAGA.</title>
        <authorList>
            <person name="Powell D.W."/>
            <person name="Weaver C.M."/>
            <person name="Jennings J.L."/>
            <person name="McAfee K.J."/>
            <person name="He Y."/>
            <person name="Weil P.A."/>
            <person name="Link A.J."/>
        </authorList>
    </citation>
    <scope>IDENTIFICATION IN THE SAGA COMPLEX</scope>
</reference>
<reference key="8">
    <citation type="journal article" date="2005" name="Mol. Cell. Biol.">
        <title>H2B ubiquitin protease Ubp8 and Sgf11 constitute a discrete functional module within the Saccharomyces cerevisiae SAGA complex.</title>
        <authorList>
            <person name="Ingvarsdottir K."/>
            <person name="Krogan N.J."/>
            <person name="Emre N.C.T."/>
            <person name="Wyce A."/>
            <person name="Thompson N.J."/>
            <person name="Emili A."/>
            <person name="Hughes T.R."/>
            <person name="Greenblatt J.F."/>
            <person name="Berger S.L."/>
        </authorList>
    </citation>
    <scope>FUNCTION IN HISTONE DEUBIQUITYLATION ACTIVITY OF THE SAGA COMPLEX</scope>
    <scope>IDENTIFICATION IN THE SAGA COMPLEX</scope>
    <scope>INTERACTION WITH UBP8</scope>
</reference>
<reference key="9">
    <citation type="journal article" date="2005" name="Mol. Cell. Biol.">
        <title>The deubiquitylation activity of Ubp8 is dependent upon Sgf11 and its association with the SAGA complex.</title>
        <authorList>
            <person name="Lee K.K."/>
            <person name="Florens L."/>
            <person name="Swanson S.K."/>
            <person name="Washburn M.P."/>
            <person name="Workman J.L."/>
        </authorList>
    </citation>
    <scope>FUNCTION IN HISTONE DEUBIQUITINATION ACTIVITY OF THE SAGA COMPLEX</scope>
    <scope>IDENTIFICATION IN THE SAGA COMPLEX</scope>
    <scope>INTERACTION WITH UBP8</scope>
</reference>
<reference key="10">
    <citation type="journal article" date="2006" name="Mol. Cell. Biol.">
        <title>Ubp8p, a histone deubiquitinase whose association with SAGA is mediated by Sgf11p, differentially regulates lysine 4 methylation of histone H3 in vivo.</title>
        <authorList>
            <person name="Shukla A."/>
            <person name="Stanojevic N."/>
            <person name="Duan Z."/>
            <person name="Sen P."/>
            <person name="Bhaumik S.R."/>
        </authorList>
    </citation>
    <scope>INTERACTION WITH UBP8</scope>
</reference>
<reference key="11">
    <citation type="journal article" date="2006" name="Mol. Biol. Cell">
        <title>The mRNA export factor Sus1 is involved in Spt/Ada/Gcn5 acetyltransferase-mediated H2B deubiquitinylation through its interaction with Ubp8 and Sgf11.</title>
        <authorList>
            <person name="Koehler A."/>
            <person name="Pascual-Garcia P."/>
            <person name="Llopis A."/>
            <person name="Zapater M."/>
            <person name="Posas F."/>
            <person name="Hurt E.C."/>
            <person name="Rodriguez-Navarro S."/>
        </authorList>
    </citation>
    <scope>INTERACTION WITH SUS1 AND UBP8</scope>
</reference>
<reference key="12">
    <citation type="journal article" date="2008" name="Nat. Cell Biol.">
        <title>Yeast Ataxin-7 links histone deubiquitination with gene gating and mRNA export.</title>
        <authorList>
            <person name="Koehler A."/>
            <person name="Schneider M."/>
            <person name="Cabal G.G."/>
            <person name="Nehrbass U."/>
            <person name="Hurt E."/>
        </authorList>
    </citation>
    <scope>INTERACTION WITH SUS1; UBP8 AND SGF73</scope>
</reference>
<reference key="13">
    <citation type="journal article" date="2014" name="EMBO J.">
        <title>Architecture of the Saccharomyces cerevisiae SAGA transcription coactivator complex.</title>
        <authorList>
            <person name="Han Y."/>
            <person name="Luo J."/>
            <person name="Ranish J."/>
            <person name="Hahn S."/>
        </authorList>
    </citation>
    <scope>SUBUNIT</scope>
</reference>
<reference key="14">
    <citation type="journal article" date="2017" name="Mol. Cell">
        <title>SAGA is a general cofactor for RNA polymerase II transcription.</title>
        <authorList>
            <person name="Baptista T."/>
            <person name="Gruenberg S."/>
            <person name="Minoungou N."/>
            <person name="Koster M.J.E."/>
            <person name="Timmers H.T.M."/>
            <person name="Hahn S."/>
            <person name="Devys D."/>
            <person name="Tora L."/>
        </authorList>
    </citation>
    <scope>FUNCTION</scope>
</reference>
<reference key="15">
    <citation type="journal article" date="2021" name="J. Biol. Chem.">
        <title>SAGA and SAGA-like SLIK transcriptional coactivators are structurally and biochemically equivalent.</title>
        <authorList>
            <person name="Adamus K."/>
            <person name="Reboul C."/>
            <person name="Voss J."/>
            <person name="Huang C."/>
            <person name="Schittenhelm R.B."/>
            <person name="Le S.N."/>
            <person name="Ellisdon A.M."/>
            <person name="Elmlund H."/>
            <person name="Boudes M."/>
            <person name="Elmlund D."/>
        </authorList>
    </citation>
    <scope>FUNCTION</scope>
    <scope>SUBUNIT</scope>
</reference>
<reference key="16">
    <citation type="journal article" date="2004" name="Mol. Cell">
        <title>Molecular architecture of the S. cerevisiae SAGA complex.</title>
        <authorList>
            <person name="Wu P.Y."/>
            <person name="Ruhlmann C."/>
            <person name="Winston F."/>
            <person name="Schultz P."/>
        </authorList>
    </citation>
    <scope>3D-STRUCTURE MODELING OF THE SAGA COMPLEX</scope>
</reference>
<reference evidence="21" key="17">
    <citation type="journal article" date="2010" name="Cell">
        <title>Structural basis for assembly and activation of the heterotetrameric SAGA histone H2B deubiquitinase module.</title>
        <authorList>
            <person name="Kohler A."/>
            <person name="Zimmerman E."/>
            <person name="Schneider M."/>
            <person name="Hurt E."/>
            <person name="Zheng N."/>
        </authorList>
    </citation>
    <scope>X-RAY CRYSTALLOGRAPHY (2.70 ANGSTROMS) IN COMPLEX WITH ZN(2+)</scope>
    <scope>MUTAGENESIS OF ASP-57; GLY-60; ARG-84; LEU-85; ALA-86; LEU-89 AND ARG-91</scope>
</reference>
<reference evidence="19 20" key="18">
    <citation type="journal article" date="2010" name="J. Biol. Chem.">
        <title>Structural basis for the interaction between yeast Spt-Ada-Gcn5 acetyltransferase (SAGA) complex components Sgf11 and Sus1.</title>
        <authorList>
            <person name="Ellisdon A.M."/>
            <person name="Jani D."/>
            <person name="Kohler A."/>
            <person name="Hurt E."/>
            <person name="Stewart M."/>
        </authorList>
    </citation>
    <scope>X-RAY CRYSTALLOGRAPHY (2.10 ANGSTROMS) OF 7-33</scope>
    <scope>MUTAGENESIS OF ASN-18 AND LEU-19</scope>
</reference>
<reference evidence="22 23" key="19">
    <citation type="journal article" date="2010" name="Science">
        <title>Structural insights into the assembly and function of the SAGA deubiquitinating module.</title>
        <authorList>
            <person name="Samara N.L."/>
            <person name="Datta A.B."/>
            <person name="Berndsen C.E."/>
            <person name="Zhang X."/>
            <person name="Yao T."/>
            <person name="Cohen R.E."/>
            <person name="Wolberger C."/>
        </authorList>
    </citation>
    <scope>X-RAY CRYSTALLOGRAPHY (1.89 ANGSTROMS) IN COMPLEX WITH ZN(2+)</scope>
</reference>
<reference evidence="24 25 26" key="20">
    <citation type="journal article" date="2012" name="Structure">
        <title>A role for intersubunit interactions in maintaining SAGA deubiquitinating module structure and activity.</title>
        <authorList>
            <person name="Samara N.L."/>
            <person name="Ringel A.E."/>
            <person name="Wolberger C."/>
        </authorList>
    </citation>
    <scope>X-RAY CRYSTALLOGRAPHY (2.03 ANGSTROMS) IN COMPLEX WITH ZN(2+)</scope>
</reference>
<reference evidence="27" key="21">
    <citation type="journal article" date="2016" name="Science">
        <title>Structural basis for histone H2B deubiquitination by the SAGA DUB module.</title>
        <authorList>
            <person name="Morgan M.T."/>
            <person name="Haj-Yahya M."/>
            <person name="Ringel A.E."/>
            <person name="Bandi P."/>
            <person name="Brik A."/>
            <person name="Wolberger C."/>
        </authorList>
    </citation>
    <scope>X-RAY CRYSTALLOGRAPHY (3.82 ANGSTROMS) IN COMPLEX WITH ZN(2+) AND A NUCLEOSOME</scope>
</reference>
<reference evidence="29" key="22">
    <citation type="journal article" date="2020" name="Nature">
        <title>Structure of the transcription coactivator SAGA.</title>
        <authorList>
            <person name="Wang H."/>
            <person name="Dienemann C."/>
            <person name="Stutzer A."/>
            <person name="Urlaub H."/>
            <person name="Cheung A.C.M."/>
            <person name="Cramer P."/>
        </authorList>
    </citation>
    <scope>STRUCTURE BY ELECTRON MICROSCOPY (3.60 ANGSTROMS) IN THE SAGA COMPLEX</scope>
</reference>
<protein>
    <recommendedName>
        <fullName>SAGA complex subunit SGF11</fullName>
    </recommendedName>
    <alternativeName>
        <fullName>11 kDa SAGA-associated factor</fullName>
    </alternativeName>
    <alternativeName>
        <fullName evidence="1">SAGA-associated factor 11</fullName>
    </alternativeName>
</protein>
<keyword id="KW-0002">3D-structure</keyword>
<keyword id="KW-0010">Activator</keyword>
<keyword id="KW-0156">Chromatin regulator</keyword>
<keyword id="KW-0479">Metal-binding</keyword>
<keyword id="KW-0539">Nucleus</keyword>
<keyword id="KW-1185">Reference proteome</keyword>
<keyword id="KW-0804">Transcription</keyword>
<keyword id="KW-0805">Transcription regulation</keyword>
<keyword id="KW-0862">Zinc</keyword>
<keyword id="KW-0863">Zinc-finger</keyword>
<name>SGF11_YEAST</name>
<sequence length="99" mass="11285">MTEETITIDSISNGILNNLLTTLIQDIVARETTQQQLLKTRYPDLRSYYFDPNGSLDINGLQKQQESSQYIHCENCGRDVSANRLAAHLQRCLSRGARR</sequence>
<feature type="chain" id="PRO_0000227805" description="SAGA complex subunit SGF11">
    <location>
        <begin position="1"/>
        <end position="99"/>
    </location>
</feature>
<feature type="zinc finger region" description="SGF11-type" evidence="1">
    <location>
        <begin position="71"/>
        <end position="92"/>
    </location>
</feature>
<feature type="binding site" evidence="12 13 21 22 23 26 27 28">
    <location>
        <position position="73"/>
    </location>
    <ligand>
        <name>Zn(2+)</name>
        <dbReference type="ChEBI" id="CHEBI:29105"/>
    </ligand>
</feature>
<feature type="binding site" evidence="12 13 27">
    <location>
        <position position="76"/>
    </location>
    <ligand>
        <name>Zn(2+)</name>
        <dbReference type="ChEBI" id="CHEBI:29105"/>
    </ligand>
</feature>
<feature type="binding site" evidence="12 13 21 22 23 26 27 28">
    <location>
        <position position="88"/>
    </location>
    <ligand>
        <name>Zn(2+)</name>
        <dbReference type="ChEBI" id="CHEBI:29105"/>
    </ligand>
</feature>
<feature type="binding site" evidence="12 13 21 22 23 26 27 28">
    <location>
        <position position="92"/>
    </location>
    <ligand>
        <name>Zn(2+)</name>
        <dbReference type="ChEBI" id="CHEBI:29105"/>
    </ligand>
</feature>
<feature type="mutagenesis site" description="Moerately decreases the affinity of SGF11 for SUS1.">
    <original>I</original>
    <variation>A</variation>
    <location>
        <position position="15"/>
    </location>
</feature>
<feature type="mutagenesis site" description="Causes a dramatic decrease in the affinity of SGF11 for SUS1." evidence="11">
    <original>N</original>
    <variation>NA</variation>
    <location>
        <position position="18"/>
    </location>
</feature>
<feature type="mutagenesis site" description="Causes a dramatic decrease in the affinity of SGF11 for SUS1." evidence="11">
    <original>L</original>
    <variation>LA</variation>
    <location>
        <position position="19"/>
    </location>
</feature>
<feature type="mutagenesis site" description="Reduces deubiquitination activity of the SAGA DUB module; when associated with A-60." evidence="13">
    <original>D</original>
    <variation>A</variation>
    <location>
        <position position="57"/>
    </location>
</feature>
<feature type="mutagenesis site" description="Reduces deubiquitination activity of the SAGA DUB module; when associated with A-57." evidence="13">
    <original>G</original>
    <variation>A</variation>
    <location>
        <position position="60"/>
    </location>
</feature>
<feature type="mutagenesis site" description="No effect." evidence="13">
    <original>R</original>
    <variation>A</variation>
    <location>
        <position position="84"/>
    </location>
</feature>
<feature type="mutagenesis site" description="Strongly reduces deubiquitination activity of the SAGA DUB module." evidence="13">
    <original>L</original>
    <variation>D</variation>
    <location>
        <position position="85"/>
    </location>
</feature>
<feature type="mutagenesis site" description="Moderately impairs deubiquitination activity of the SAGA DUB module." evidence="13">
    <original>A</original>
    <variation>D</variation>
    <location>
        <position position="86"/>
    </location>
</feature>
<feature type="mutagenesis site" description="Strongly reduces deubiquitination activity of the SAGA DUB module." evidence="13">
    <original>L</original>
    <variation>D</variation>
    <location>
        <position position="89"/>
    </location>
</feature>
<feature type="mutagenesis site" description="No effect." evidence="13">
    <original>R</original>
    <variation>A</variation>
    <location>
        <position position="91"/>
    </location>
</feature>
<feature type="helix" evidence="30">
    <location>
        <begin position="8"/>
        <end position="41"/>
    </location>
</feature>
<feature type="helix" evidence="31">
    <location>
        <begin position="66"/>
        <end position="68"/>
    </location>
</feature>
<feature type="strand" evidence="30">
    <location>
        <begin position="70"/>
        <end position="72"/>
    </location>
</feature>
<feature type="turn" evidence="30">
    <location>
        <begin position="74"/>
        <end position="76"/>
    </location>
</feature>
<feature type="strand" evidence="30">
    <location>
        <begin position="79"/>
        <end position="81"/>
    </location>
</feature>
<feature type="helix" evidence="30">
    <location>
        <begin position="82"/>
        <end position="84"/>
    </location>
</feature>
<feature type="helix" evidence="30">
    <location>
        <begin position="85"/>
        <end position="92"/>
    </location>
</feature>
<organism>
    <name type="scientific">Saccharomyces cerevisiae (strain ATCC 204508 / S288c)</name>
    <name type="common">Baker's yeast</name>
    <dbReference type="NCBI Taxonomy" id="559292"/>
    <lineage>
        <taxon>Eukaryota</taxon>
        <taxon>Fungi</taxon>
        <taxon>Dikarya</taxon>
        <taxon>Ascomycota</taxon>
        <taxon>Saccharomycotina</taxon>
        <taxon>Saccharomycetes</taxon>
        <taxon>Saccharomycetales</taxon>
        <taxon>Saccharomycetaceae</taxon>
        <taxon>Saccharomyces</taxon>
    </lineage>
</organism>
<accession>Q03067</accession>
<accession>D6W3W7</accession>
<proteinExistence type="evidence at protein level"/>
<comment type="function">
    <text evidence="6 7 13 14 16 17 18">Component of the transcription coactivator SAGA complex (PubMed:25216679, PubMed:28918903). SAGA acts as a general cofactor required for essentially all RNA polymerase II transcription (PubMed:25216679, PubMed:28918903). At the promoters, SAGA is required for transcription pre-initiation complex (PIC) recruitment. It influences RNA polymerase II transcriptional activity through different activities such as TBP interaction (via core/TAF module) and promoter selectivity, interaction with transcription activators (via Tra1/SPT module), and chromatin modification through histone acetylation (via HAT module) and deubiquitination (via DUB module) (PubMed:31969703). SAGA preferentially acetylates histones H3 (to form H3K9ac, H3K14ac, H3K18ac and H3K23ac) and H2B and deubiquitinates histone H2B (PubMed:15657441). SAGA interacts with DNA via upstream activating sequences (UASs) (PubMed:28918903). Also identified in a modified version of SAGA named SALSA or SLIK. The cleavage of SPT7 and the absence of the SPT8 subunit in SLIK neither drive any major conformational differences in its structure compared with SAGA, nor significantly affect HAT, DUB, or DNA-binding activities (PubMed:33864814). Within the DUB module, the correctly positioned zinc finger domains of SGF11 and SGF73 are both required to fully activate the ubiquitin hydrolase UBP8 (PubMed:15657442, PubMed:20434206). Deubiquitination of H2B is required for the maintenance of steady-state H3 methylation levels. SGF11 is required to recruit UBP8 and SUS1 into the SAGA complex (PubMed:15657441, PubMed:15657442).</text>
</comment>
<comment type="subunit">
    <text evidence="4 5 6 7 8 9 10 14 17 18">Component of the 1.8 MDa SAGA (Spt-Ada-Gcn5 acetyltransferase) complex, which is composed of 19 subunits TRA1, SPT7, TAF5, NGG1/ADA3, SGF73, SPT20/ADA5, SPT8, TAF12, TAF6, HFI1/ADA1, UBP8, GCN5, ADA2, SPT3, SGF29, TAF10, TAF9, SGF11 and SUS1 (PubMed:15282323, PubMed:15506919, PubMed:15657441, PubMed:15657442, PubMed:31969703). The SAGA complex is composed of 4 modules, namely the HAT (histone acetyltransferase) module (GCN5, ADA2, NGG1/ADA3 and SGF29), the DUB (deubiquitinating) module (UBP8, SGF11, SGF73 and SUS1), the core or TAF (TBP-associated factor) module (TAF5, TAF6, TAF9, TAF10 and TAF12), and the Tra1 or SPT (Suppressor of Ty) module (TRA1, HFI1/ADA1, SPT3, SPT7, SPT8 and SPT20/ADA5). The Tra1/SPT module binds activators, the core module recruits TBP (TATA-binding protein), the HAT module contains the histone H3 acetyltransferase GCN5, and the DUB module comprises the histone H2B deubiquitinase UBP8 (PubMed:25216679, PubMed:31969703). Also identified in an altered form of SAGA, named SALSA (SAGA altered, Spt8 absent) or SLIK (SAGA-like) complex, which contains a C-terminal truncated form of SPT7 and is missing SPT8 (PubMed:33864814). However, it has been shown that the SAGA and SAGA-like SALSA/SLIK transcriptional coactivators are structurally and biochemically equivalent (PubMed:33864814). Interacts directly with SGF73, SUS1 and UBP8 (PubMed:16611979, PubMed:16855026, PubMed:18488019).</text>
</comment>
<comment type="interaction">
    <interactant intactId="EBI-34550">
        <id>Q03067</id>
    </interactant>
    <interactant intactId="EBI-1251050">
        <id>Q6WNK7</id>
        <label>SUS1</label>
    </interactant>
    <organismsDiffer>false</organismsDiffer>
    <experiments>13</experiments>
</comment>
<comment type="subcellular location">
    <subcellularLocation>
        <location evidence="1 2">Nucleus</location>
    </subcellularLocation>
</comment>
<comment type="domain">
    <text>The long N-terminal helix forms part of the 'assembly lobe' of the SAGA deubiquitination module.</text>
</comment>
<comment type="domain">
    <text>The C-terminal SGF11-type zinc-finger domain together with the C-terminal catalytic domain of UBP8 forms the 'catalytic lobe' of the SAGA deubiquitination module.</text>
</comment>
<comment type="domain">
    <text evidence="15">An arginine cluster on the SGF11 zinc finger domain (Arg-78, Arg-84, and Arg-91) is the primary contact to the nucleosome, docking on the conserved H2A/H2B acidic patch (H2A-'Glu-64', H2B-'Glu-107', and H2A-'Glu-61').</text>
</comment>
<comment type="miscellaneous">
    <text evidence="3">Present with 672 molecules/cell in log phase SD medium.</text>
</comment>
<comment type="similarity">
    <text evidence="1">Belongs to the SGF11 family.</text>
</comment>
<evidence type="ECO:0000255" key="1">
    <source>
        <dbReference type="HAMAP-Rule" id="MF_03047"/>
    </source>
</evidence>
<evidence type="ECO:0000269" key="2">
    <source>
    </source>
</evidence>
<evidence type="ECO:0000269" key="3">
    <source>
    </source>
</evidence>
<evidence type="ECO:0000269" key="4">
    <source>
    </source>
</evidence>
<evidence type="ECO:0000269" key="5">
    <source>
    </source>
</evidence>
<evidence type="ECO:0000269" key="6">
    <source>
    </source>
</evidence>
<evidence type="ECO:0000269" key="7">
    <source>
    </source>
</evidence>
<evidence type="ECO:0000269" key="8">
    <source>
    </source>
</evidence>
<evidence type="ECO:0000269" key="9">
    <source>
    </source>
</evidence>
<evidence type="ECO:0000269" key="10">
    <source>
    </source>
</evidence>
<evidence type="ECO:0000269" key="11">
    <source>
    </source>
</evidence>
<evidence type="ECO:0000269" key="12">
    <source>
    </source>
</evidence>
<evidence type="ECO:0000269" key="13">
    <source>
    </source>
</evidence>
<evidence type="ECO:0000269" key="14">
    <source>
    </source>
</evidence>
<evidence type="ECO:0000269" key="15">
    <source>
    </source>
</evidence>
<evidence type="ECO:0000269" key="16">
    <source>
    </source>
</evidence>
<evidence type="ECO:0000269" key="17">
    <source>
    </source>
</evidence>
<evidence type="ECO:0000269" key="18">
    <source>
    </source>
</evidence>
<evidence type="ECO:0007744" key="19">
    <source>
        <dbReference type="PDB" id="3KIK"/>
    </source>
</evidence>
<evidence type="ECO:0007744" key="20">
    <source>
        <dbReference type="PDB" id="3KJL"/>
    </source>
</evidence>
<evidence type="ECO:0007744" key="21">
    <source>
        <dbReference type="PDB" id="3M99"/>
    </source>
</evidence>
<evidence type="ECO:0007744" key="22">
    <source>
        <dbReference type="PDB" id="3MHH"/>
    </source>
</evidence>
<evidence type="ECO:0007744" key="23">
    <source>
        <dbReference type="PDB" id="3MHS"/>
    </source>
</evidence>
<evidence type="ECO:0007744" key="24">
    <source>
        <dbReference type="PDB" id="4FIP"/>
    </source>
</evidence>
<evidence type="ECO:0007744" key="25">
    <source>
        <dbReference type="PDB" id="4FJC"/>
    </source>
</evidence>
<evidence type="ECO:0007744" key="26">
    <source>
        <dbReference type="PDB" id="4FK5"/>
    </source>
</evidence>
<evidence type="ECO:0007744" key="27">
    <source>
        <dbReference type="PDB" id="4ZUX"/>
    </source>
</evidence>
<evidence type="ECO:0007744" key="28">
    <source>
        <dbReference type="PDB" id="6AQR"/>
    </source>
</evidence>
<evidence type="ECO:0007744" key="29">
    <source>
        <dbReference type="PDB" id="6T9L"/>
    </source>
</evidence>
<evidence type="ECO:0007829" key="30">
    <source>
        <dbReference type="PDB" id="3MHS"/>
    </source>
</evidence>
<evidence type="ECO:0007829" key="31">
    <source>
        <dbReference type="PDB" id="4FK5"/>
    </source>
</evidence>